<protein>
    <recommendedName>
        <fullName>Inositol hexakisphosphate kinase 2</fullName>
        <shortName>InsP6 kinase 2</shortName>
        <ecNumber evidence="4">2.7.4.-</ecNumber>
    </recommendedName>
    <alternativeName>
        <fullName>P(i)-uptake stimulator</fullName>
        <shortName>PiUS</shortName>
    </alternativeName>
</protein>
<gene>
    <name type="primary">Ip6k2</name>
    <name type="synonym">Ihpk2</name>
</gene>
<name>IP6K2_MOUSE</name>
<accession>Q80V72</accession>
<accession>E9QMT6</accession>
<organism>
    <name type="scientific">Mus musculus</name>
    <name type="common">Mouse</name>
    <dbReference type="NCBI Taxonomy" id="10090"/>
    <lineage>
        <taxon>Eukaryota</taxon>
        <taxon>Metazoa</taxon>
        <taxon>Chordata</taxon>
        <taxon>Craniata</taxon>
        <taxon>Vertebrata</taxon>
        <taxon>Euteleostomi</taxon>
        <taxon>Mammalia</taxon>
        <taxon>Eutheria</taxon>
        <taxon>Euarchontoglires</taxon>
        <taxon>Glires</taxon>
        <taxon>Rodentia</taxon>
        <taxon>Myomorpha</taxon>
        <taxon>Muroidea</taxon>
        <taxon>Muridae</taxon>
        <taxon>Murinae</taxon>
        <taxon>Mus</taxon>
        <taxon>Mus</taxon>
    </lineage>
</organism>
<evidence type="ECO:0000250" key="1"/>
<evidence type="ECO:0000250" key="2">
    <source>
        <dbReference type="UniProtKB" id="Q8NFU5"/>
    </source>
</evidence>
<evidence type="ECO:0000250" key="3">
    <source>
        <dbReference type="UniProtKB" id="Q95221"/>
    </source>
</evidence>
<evidence type="ECO:0000250" key="4">
    <source>
        <dbReference type="UniProtKB" id="Q9UHH9"/>
    </source>
</evidence>
<evidence type="ECO:0000269" key="5">
    <source>
    </source>
</evidence>
<evidence type="ECO:0000305" key="6"/>
<dbReference type="EC" id="2.7.4.-" evidence="4"/>
<dbReference type="EMBL" id="AC168054">
    <property type="status" value="NOT_ANNOTATED_CDS"/>
    <property type="molecule type" value="Genomic_DNA"/>
</dbReference>
<dbReference type="EMBL" id="AC173341">
    <property type="status" value="NOT_ANNOTATED_CDS"/>
    <property type="molecule type" value="Genomic_DNA"/>
</dbReference>
<dbReference type="EMBL" id="BC039922">
    <property type="protein sequence ID" value="AAH39922.1"/>
    <property type="molecule type" value="mRNA"/>
</dbReference>
<dbReference type="CCDS" id="CCDS23537.1"/>
<dbReference type="RefSeq" id="NP_001366530.1">
    <property type="nucleotide sequence ID" value="NM_001379601.1"/>
</dbReference>
<dbReference type="RefSeq" id="NP_083910.2">
    <property type="nucleotide sequence ID" value="NM_029634.2"/>
</dbReference>
<dbReference type="RefSeq" id="XP_006511913.1">
    <property type="nucleotide sequence ID" value="XM_006511850.2"/>
</dbReference>
<dbReference type="RefSeq" id="XP_006511914.1">
    <property type="nucleotide sequence ID" value="XM_006511851.5"/>
</dbReference>
<dbReference type="SMR" id="Q80V72"/>
<dbReference type="BioGRID" id="218156">
    <property type="interactions" value="2"/>
</dbReference>
<dbReference type="FunCoup" id="Q80V72">
    <property type="interactions" value="3749"/>
</dbReference>
<dbReference type="STRING" id="10090.ENSMUSP00000082091"/>
<dbReference type="ChEMBL" id="CHEMBL4523367"/>
<dbReference type="iPTMnet" id="Q80V72"/>
<dbReference type="PhosphoSitePlus" id="Q80V72"/>
<dbReference type="PaxDb" id="10090-ENSMUSP00000082091"/>
<dbReference type="PeptideAtlas" id="Q80V72"/>
<dbReference type="ProteomicsDB" id="266998"/>
<dbReference type="Antibodypedia" id="1556">
    <property type="antibodies" value="217 antibodies from 31 providers"/>
</dbReference>
<dbReference type="DNASU" id="76500"/>
<dbReference type="Ensembl" id="ENSMUST00000085018.6">
    <property type="protein sequence ID" value="ENSMUSP00000082091.5"/>
    <property type="gene ID" value="ENSMUSG00000032599.13"/>
</dbReference>
<dbReference type="GeneID" id="76500"/>
<dbReference type="KEGG" id="mmu:76500"/>
<dbReference type="UCSC" id="uc009rqw.1">
    <property type="organism name" value="mouse"/>
</dbReference>
<dbReference type="AGR" id="MGI:1923750"/>
<dbReference type="CTD" id="51447"/>
<dbReference type="MGI" id="MGI:1923750">
    <property type="gene designation" value="Ip6k2"/>
</dbReference>
<dbReference type="VEuPathDB" id="HostDB:ENSMUSG00000032599"/>
<dbReference type="eggNOG" id="KOG1620">
    <property type="taxonomic scope" value="Eukaryota"/>
</dbReference>
<dbReference type="GeneTree" id="ENSGT00940000156310"/>
<dbReference type="InParanoid" id="Q80V72"/>
<dbReference type="OMA" id="WANKKTH"/>
<dbReference type="OrthoDB" id="2573163at2759"/>
<dbReference type="PhylomeDB" id="Q80V72"/>
<dbReference type="TreeFam" id="TF314066"/>
<dbReference type="BRENDA" id="2.7.4.21">
    <property type="organism ID" value="3474"/>
</dbReference>
<dbReference type="Reactome" id="R-MMU-1855191">
    <property type="pathway name" value="Synthesis of IPs in the nucleus"/>
</dbReference>
<dbReference type="UniPathway" id="UPA00949"/>
<dbReference type="BioGRID-ORCS" id="76500">
    <property type="hits" value="0 hits in 80 CRISPR screens"/>
</dbReference>
<dbReference type="ChiTaRS" id="Ip6k2">
    <property type="organism name" value="mouse"/>
</dbReference>
<dbReference type="PRO" id="PR:Q80V72"/>
<dbReference type="Proteomes" id="UP000000589">
    <property type="component" value="Chromosome 9"/>
</dbReference>
<dbReference type="RNAct" id="Q80V72">
    <property type="molecule type" value="protein"/>
</dbReference>
<dbReference type="Bgee" id="ENSMUSG00000032599">
    <property type="expression patterns" value="Expressed in layer of retina and 104 other cell types or tissues"/>
</dbReference>
<dbReference type="ExpressionAtlas" id="Q80V72">
    <property type="expression patterns" value="baseline and differential"/>
</dbReference>
<dbReference type="GO" id="GO:0030054">
    <property type="term" value="C:cell junction"/>
    <property type="evidence" value="ECO:0007669"/>
    <property type="project" value="Ensembl"/>
</dbReference>
<dbReference type="GO" id="GO:0001650">
    <property type="term" value="C:fibrillar center"/>
    <property type="evidence" value="ECO:0007669"/>
    <property type="project" value="Ensembl"/>
</dbReference>
<dbReference type="GO" id="GO:0005654">
    <property type="term" value="C:nucleoplasm"/>
    <property type="evidence" value="ECO:0007669"/>
    <property type="project" value="Ensembl"/>
</dbReference>
<dbReference type="GO" id="GO:0005634">
    <property type="term" value="C:nucleus"/>
    <property type="evidence" value="ECO:0000314"/>
    <property type="project" value="UniProtKB"/>
</dbReference>
<dbReference type="GO" id="GO:0005524">
    <property type="term" value="F:ATP binding"/>
    <property type="evidence" value="ECO:0007669"/>
    <property type="project" value="UniProtKB-KW"/>
</dbReference>
<dbReference type="GO" id="GO:0097243">
    <property type="term" value="F:flavonoid binding"/>
    <property type="evidence" value="ECO:0000250"/>
    <property type="project" value="UniProtKB"/>
</dbReference>
<dbReference type="GO" id="GO:0000832">
    <property type="term" value="F:inositol hexakisphosphate 5-kinase activity"/>
    <property type="evidence" value="ECO:0000250"/>
    <property type="project" value="UniProtKB"/>
</dbReference>
<dbReference type="GO" id="GO:0000828">
    <property type="term" value="F:inositol hexakisphosphate kinase activity"/>
    <property type="evidence" value="ECO:0000315"/>
    <property type="project" value="MGI"/>
</dbReference>
<dbReference type="GO" id="GO:0044877">
    <property type="term" value="F:protein-containing complex binding"/>
    <property type="evidence" value="ECO:0000266"/>
    <property type="project" value="MGI"/>
</dbReference>
<dbReference type="GO" id="GO:1905396">
    <property type="term" value="P:cellular response to flavonoid"/>
    <property type="evidence" value="ECO:0000250"/>
    <property type="project" value="UniProtKB"/>
</dbReference>
<dbReference type="GO" id="GO:0032958">
    <property type="term" value="P:inositol phosphate biosynthetic process"/>
    <property type="evidence" value="ECO:0000315"/>
    <property type="project" value="MGI"/>
</dbReference>
<dbReference type="GO" id="GO:0043647">
    <property type="term" value="P:inositol phosphate metabolic process"/>
    <property type="evidence" value="ECO:0000250"/>
    <property type="project" value="UniProtKB"/>
</dbReference>
<dbReference type="GO" id="GO:0030308">
    <property type="term" value="P:negative regulation of cell growth"/>
    <property type="evidence" value="ECO:0007669"/>
    <property type="project" value="Ensembl"/>
</dbReference>
<dbReference type="GO" id="GO:0046854">
    <property type="term" value="P:phosphatidylinositol phosphate biosynthetic process"/>
    <property type="evidence" value="ECO:0007669"/>
    <property type="project" value="Ensembl"/>
</dbReference>
<dbReference type="GO" id="GO:0043065">
    <property type="term" value="P:positive regulation of apoptotic process"/>
    <property type="evidence" value="ECO:0007669"/>
    <property type="project" value="Ensembl"/>
</dbReference>
<dbReference type="GO" id="GO:0050821">
    <property type="term" value="P:protein stabilization"/>
    <property type="evidence" value="ECO:0000315"/>
    <property type="project" value="MGI"/>
</dbReference>
<dbReference type="FunFam" id="3.30.470.160:FF:000002">
    <property type="entry name" value="Kinase"/>
    <property type="match status" value="1"/>
</dbReference>
<dbReference type="Gene3D" id="3.30.470.160">
    <property type="entry name" value="Inositol polyphosphate kinase"/>
    <property type="match status" value="1"/>
</dbReference>
<dbReference type="InterPro" id="IPR005522">
    <property type="entry name" value="IPK"/>
</dbReference>
<dbReference type="InterPro" id="IPR038286">
    <property type="entry name" value="IPK_sf"/>
</dbReference>
<dbReference type="PANTHER" id="PTHR12400:SF47">
    <property type="entry name" value="INOSITOL HEXAKISPHOSPHATE KINASE 2"/>
    <property type="match status" value="1"/>
</dbReference>
<dbReference type="PANTHER" id="PTHR12400">
    <property type="entry name" value="INOSITOL POLYPHOSPHATE KINASE"/>
    <property type="match status" value="1"/>
</dbReference>
<dbReference type="Pfam" id="PF03770">
    <property type="entry name" value="IPK"/>
    <property type="match status" value="1"/>
</dbReference>
<dbReference type="SUPFAM" id="SSF56104">
    <property type="entry name" value="SAICAR synthase-like"/>
    <property type="match status" value="1"/>
</dbReference>
<feature type="chain" id="PRO_0000066878" description="Inositol hexakisphosphate kinase 2">
    <location>
        <begin position="1"/>
        <end position="448"/>
    </location>
</feature>
<feature type="binding site" evidence="2">
    <location>
        <begin position="229"/>
        <end position="231"/>
    </location>
    <ligand>
        <name>ATP</name>
        <dbReference type="ChEBI" id="CHEBI:30616"/>
    </ligand>
</feature>
<feature type="binding site" evidence="1">
    <location>
        <begin position="238"/>
        <end position="246"/>
    </location>
    <ligand>
        <name>substrate</name>
    </ligand>
</feature>
<feature type="binding site" evidence="2">
    <location>
        <position position="242"/>
    </location>
    <ligand>
        <name>ATP</name>
        <dbReference type="ChEBI" id="CHEBI:30616"/>
    </ligand>
</feature>
<feature type="binding site" evidence="2">
    <location>
        <position position="244"/>
    </location>
    <ligand>
        <name>substrate</name>
    </ligand>
</feature>
<feature type="binding site" evidence="2">
    <location>
        <begin position="258"/>
        <end position="265"/>
    </location>
    <ligand>
        <name>substrate</name>
    </ligand>
</feature>
<feature type="binding site" evidence="2">
    <location>
        <position position="405"/>
    </location>
    <ligand>
        <name>ATP</name>
        <dbReference type="ChEBI" id="CHEBI:30616"/>
    </ligand>
</feature>
<feature type="binding site" evidence="2">
    <location>
        <position position="408"/>
    </location>
    <ligand>
        <name>substrate</name>
    </ligand>
</feature>
<feature type="sequence conflict" description="In Ref. 2; AAH39922." evidence="6" ref="2">
    <original>M</original>
    <variation>I</variation>
    <location>
        <position position="292"/>
    </location>
</feature>
<comment type="function">
    <text evidence="3 4">Converts inositol hexakisphosphate (InsP6) to diphosphoinositol pentakisphosphate (InsP7/PP-InsP5) (By similarity). May play a role in the regulation of Na(+)-dependent phosphate cotransport, possibly via its role in diphosphoinositol pentakisphosphate (InsP7/PP-InsP5) biosynthesis (By similarity).</text>
</comment>
<comment type="catalytic activity">
    <reaction>
        <text>1D-myo-inositol hexakisphosphate + ATP = 5-diphospho-1D-myo-inositol 1,2,3,4,6-pentakisphosphate + ADP</text>
        <dbReference type="Rhea" id="RHEA:12793"/>
        <dbReference type="ChEBI" id="CHEBI:30616"/>
        <dbReference type="ChEBI" id="CHEBI:58130"/>
        <dbReference type="ChEBI" id="CHEBI:58628"/>
        <dbReference type="ChEBI" id="CHEBI:456216"/>
    </reaction>
</comment>
<comment type="pathway">
    <text evidence="4">Phospholipid metabolism; phosphatidylinositol metabolism.</text>
</comment>
<comment type="subcellular location">
    <subcellularLocation>
        <location evidence="4">Nucleus</location>
    </subcellularLocation>
</comment>
<comment type="tissue specificity">
    <text evidence="5">Highly expressed in brain and lung, and at slightly lower levels in liver, kidney and testis.</text>
</comment>
<comment type="similarity">
    <text evidence="6">Belongs to the inositol phosphokinase (IPK) family.</text>
</comment>
<reference key="1">
    <citation type="journal article" date="2009" name="PLoS Biol.">
        <title>Lineage-specific biology revealed by a finished genome assembly of the mouse.</title>
        <authorList>
            <person name="Church D.M."/>
            <person name="Goodstadt L."/>
            <person name="Hillier L.W."/>
            <person name="Zody M.C."/>
            <person name="Goldstein S."/>
            <person name="She X."/>
            <person name="Bult C.J."/>
            <person name="Agarwala R."/>
            <person name="Cherry J.L."/>
            <person name="DiCuccio M."/>
            <person name="Hlavina W."/>
            <person name="Kapustin Y."/>
            <person name="Meric P."/>
            <person name="Maglott D."/>
            <person name="Birtle Z."/>
            <person name="Marques A.C."/>
            <person name="Graves T."/>
            <person name="Zhou S."/>
            <person name="Teague B."/>
            <person name="Potamousis K."/>
            <person name="Churas C."/>
            <person name="Place M."/>
            <person name="Herschleb J."/>
            <person name="Runnheim R."/>
            <person name="Forrest D."/>
            <person name="Amos-Landgraf J."/>
            <person name="Schwartz D.C."/>
            <person name="Cheng Z."/>
            <person name="Lindblad-Toh K."/>
            <person name="Eichler E.E."/>
            <person name="Ponting C.P."/>
        </authorList>
    </citation>
    <scope>NUCLEOTIDE SEQUENCE [LARGE SCALE GENOMIC DNA]</scope>
    <source>
        <strain>C57BL/6J</strain>
    </source>
</reference>
<reference key="2">
    <citation type="journal article" date="2004" name="Genome Res.">
        <title>The status, quality, and expansion of the NIH full-length cDNA project: the Mammalian Gene Collection (MGC).</title>
        <authorList>
            <consortium name="The MGC Project Team"/>
        </authorList>
    </citation>
    <scope>NUCLEOTIDE SEQUENCE [LARGE SCALE MRNA]</scope>
    <source>
        <strain>FVB/N</strain>
        <tissue>Mammary tumor</tissue>
    </source>
</reference>
<reference key="3">
    <citation type="journal article" date="1999" name="Curr. Biol.">
        <title>Synthesis of diphosphoinositol pentakisphosphate by a newly identified family of higher inositol polyphosphate kinases.</title>
        <authorList>
            <person name="Saiardi A."/>
            <person name="Erdjument-Bromage H."/>
            <person name="Snowman A.M."/>
            <person name="Tempst P."/>
            <person name="Snyder S.H."/>
        </authorList>
    </citation>
    <scope>TISSUE SPECIFICITY</scope>
</reference>
<sequence>MSPAFRTMDVEPRTKGILLEPFVHQVGGHSCVLRFNETTLCKPLVPREHQFYETLPAEMRRFTPQYKAVLIFVRCADEFGASGNIETKEQGVVSVRFEEDEDRNLCLIAYPLKGDHGTVDIVDNSDCEPKSKLLRWTNKKHHALETEKNPKDWVRQHRKEEKMKSHKLEEEFEWLKKSEVLYYSVEKKGNVSSQLKHYNPWSMKCHQQQLQRMKENAKHRNQYKFILLENLTSRYEVPCVLDLKMGTRQHGDDASEEKAANQIRKCQQSTSAVIGVRVCGMQVYQAGTGQLMFMNKYHGRKLSVQGFKEALFQFFHNGRYLRRELLGPVLKKLTELKAVLERQESYRFYSSSLLVIYDGKEWPEVTLDSDAEDLEDLSEESADESAGAYAYKPIGASSVDVRMIDFAHTTCRLYGEDSVVHEGQDAGYIFGLQSLIDIVTEISEESGE</sequence>
<proteinExistence type="evidence at transcript level"/>
<keyword id="KW-0067">ATP-binding</keyword>
<keyword id="KW-0418">Kinase</keyword>
<keyword id="KW-0443">Lipid metabolism</keyword>
<keyword id="KW-0547">Nucleotide-binding</keyword>
<keyword id="KW-0539">Nucleus</keyword>
<keyword id="KW-1208">Phospholipid metabolism</keyword>
<keyword id="KW-1185">Reference proteome</keyword>
<keyword id="KW-0808">Transferase</keyword>